<name>KPSH1_HUMAN</name>
<gene>
    <name type="primary">PSKH1</name>
</gene>
<dbReference type="EC" id="2.7.11.1" evidence="9"/>
<dbReference type="EMBL" id="AJ272212">
    <property type="protein sequence ID" value="CAB91984.1"/>
    <property type="molecule type" value="mRNA"/>
</dbReference>
<dbReference type="EMBL" id="BC062616">
    <property type="protein sequence ID" value="AAH62616.1"/>
    <property type="molecule type" value="mRNA"/>
</dbReference>
<dbReference type="EMBL" id="M14504">
    <property type="protein sequence ID" value="AAA36519.1"/>
    <property type="molecule type" value="mRNA"/>
</dbReference>
<dbReference type="CCDS" id="CCDS10851.1"/>
<dbReference type="PIR" id="B26368">
    <property type="entry name" value="B26368"/>
</dbReference>
<dbReference type="PIR" id="I38138">
    <property type="entry name" value="I38138"/>
</dbReference>
<dbReference type="RefSeq" id="NP_006733.1">
    <property type="nucleotide sequence ID" value="NM_006742.3"/>
</dbReference>
<dbReference type="SMR" id="P11801"/>
<dbReference type="BioGRID" id="111654">
    <property type="interactions" value="63"/>
</dbReference>
<dbReference type="FunCoup" id="P11801">
    <property type="interactions" value="1071"/>
</dbReference>
<dbReference type="IntAct" id="P11801">
    <property type="interactions" value="57"/>
</dbReference>
<dbReference type="STRING" id="9606.ENSP00000291041"/>
<dbReference type="ChEMBL" id="CHEMBL4524035"/>
<dbReference type="GlyGen" id="P11801">
    <property type="glycosylation" value="1 site"/>
</dbReference>
<dbReference type="iPTMnet" id="P11801"/>
<dbReference type="PhosphoSitePlus" id="P11801"/>
<dbReference type="SwissPalm" id="P11801"/>
<dbReference type="BioMuta" id="PSKH1"/>
<dbReference type="DMDM" id="17379144"/>
<dbReference type="MassIVE" id="P11801"/>
<dbReference type="PaxDb" id="9606-ENSP00000291041"/>
<dbReference type="PeptideAtlas" id="P11801"/>
<dbReference type="ProteomicsDB" id="52804"/>
<dbReference type="Antibodypedia" id="29669">
    <property type="antibodies" value="139 antibodies from 30 providers"/>
</dbReference>
<dbReference type="DNASU" id="5681"/>
<dbReference type="Ensembl" id="ENST00000291041.6">
    <property type="protein sequence ID" value="ENSP00000291041.4"/>
    <property type="gene ID" value="ENSG00000159792.10"/>
</dbReference>
<dbReference type="GeneID" id="5681"/>
<dbReference type="KEGG" id="hsa:5681"/>
<dbReference type="MANE-Select" id="ENST00000291041.6">
    <property type="protein sequence ID" value="ENSP00000291041.4"/>
    <property type="RefSeq nucleotide sequence ID" value="NM_006742.3"/>
    <property type="RefSeq protein sequence ID" value="NP_006733.1"/>
</dbReference>
<dbReference type="UCSC" id="uc002euv.3">
    <property type="organism name" value="human"/>
</dbReference>
<dbReference type="AGR" id="HGNC:9529"/>
<dbReference type="CTD" id="5681"/>
<dbReference type="DisGeNET" id="5681"/>
<dbReference type="GeneCards" id="PSKH1"/>
<dbReference type="HGNC" id="HGNC:9529">
    <property type="gene designation" value="PSKH1"/>
</dbReference>
<dbReference type="HPA" id="ENSG00000159792">
    <property type="expression patterns" value="Low tissue specificity"/>
</dbReference>
<dbReference type="MalaCards" id="PSKH1"/>
<dbReference type="MIM" id="177015">
    <property type="type" value="gene"/>
</dbReference>
<dbReference type="MIM" id="620962">
    <property type="type" value="phenotype"/>
</dbReference>
<dbReference type="neXtProt" id="NX_P11801"/>
<dbReference type="OpenTargets" id="ENSG00000159792"/>
<dbReference type="PharmGKB" id="PA33874"/>
<dbReference type="VEuPathDB" id="HostDB:ENSG00000159792"/>
<dbReference type="eggNOG" id="KOG0032">
    <property type="taxonomic scope" value="Eukaryota"/>
</dbReference>
<dbReference type="GeneTree" id="ENSGT00940000157041"/>
<dbReference type="InParanoid" id="P11801"/>
<dbReference type="OMA" id="SYAGEHW"/>
<dbReference type="OrthoDB" id="40902at2759"/>
<dbReference type="PAN-GO" id="P11801">
    <property type="GO annotations" value="0 GO annotations based on evolutionary models"/>
</dbReference>
<dbReference type="PhylomeDB" id="P11801"/>
<dbReference type="TreeFam" id="TF314166"/>
<dbReference type="BRENDA" id="2.7.11.1">
    <property type="organism ID" value="2681"/>
</dbReference>
<dbReference type="PathwayCommons" id="P11801"/>
<dbReference type="SignaLink" id="P11801"/>
<dbReference type="BioGRID-ORCS" id="5681">
    <property type="hits" value="13 hits in 1193 CRISPR screens"/>
</dbReference>
<dbReference type="CD-CODE" id="8C2F96ED">
    <property type="entry name" value="Centrosome"/>
</dbReference>
<dbReference type="ChiTaRS" id="PSKH1">
    <property type="organism name" value="human"/>
</dbReference>
<dbReference type="GeneWiki" id="PSKH1"/>
<dbReference type="GenomeRNAi" id="5681"/>
<dbReference type="Pharos" id="P11801">
    <property type="development level" value="Tbio"/>
</dbReference>
<dbReference type="PRO" id="PR:P11801"/>
<dbReference type="Proteomes" id="UP000005640">
    <property type="component" value="Chromosome 16"/>
</dbReference>
<dbReference type="RNAct" id="P11801">
    <property type="molecule type" value="protein"/>
</dbReference>
<dbReference type="Bgee" id="ENSG00000159792">
    <property type="expression patterns" value="Expressed in stromal cell of endometrium and 145 other cell types or tissues"/>
</dbReference>
<dbReference type="ExpressionAtlas" id="P11801">
    <property type="expression patterns" value="baseline and differential"/>
</dbReference>
<dbReference type="GO" id="GO:0005813">
    <property type="term" value="C:centrosome"/>
    <property type="evidence" value="ECO:0007669"/>
    <property type="project" value="UniProtKB-SubCell"/>
</dbReference>
<dbReference type="GO" id="GO:0005929">
    <property type="term" value="C:cilium"/>
    <property type="evidence" value="ECO:0000314"/>
    <property type="project" value="HPA"/>
</dbReference>
<dbReference type="GO" id="GO:0005737">
    <property type="term" value="C:cytoplasm"/>
    <property type="evidence" value="ECO:0000318"/>
    <property type="project" value="GO_Central"/>
</dbReference>
<dbReference type="GO" id="GO:0005829">
    <property type="term" value="C:cytosol"/>
    <property type="evidence" value="ECO:0000314"/>
    <property type="project" value="HPA"/>
</dbReference>
<dbReference type="GO" id="GO:0005789">
    <property type="term" value="C:endoplasmic reticulum membrane"/>
    <property type="evidence" value="ECO:0007669"/>
    <property type="project" value="UniProtKB-SubCell"/>
</dbReference>
<dbReference type="GO" id="GO:0005794">
    <property type="term" value="C:Golgi apparatus"/>
    <property type="evidence" value="ECO:0007669"/>
    <property type="project" value="UniProtKB-SubCell"/>
</dbReference>
<dbReference type="GO" id="GO:0016607">
    <property type="term" value="C:nuclear speck"/>
    <property type="evidence" value="ECO:0000314"/>
    <property type="project" value="HPA"/>
</dbReference>
<dbReference type="GO" id="GO:0005886">
    <property type="term" value="C:plasma membrane"/>
    <property type="evidence" value="ECO:0000314"/>
    <property type="project" value="HPA"/>
</dbReference>
<dbReference type="GO" id="GO:0005524">
    <property type="term" value="F:ATP binding"/>
    <property type="evidence" value="ECO:0007669"/>
    <property type="project" value="UniProtKB-KW"/>
</dbReference>
<dbReference type="GO" id="GO:0106310">
    <property type="term" value="F:protein serine kinase activity"/>
    <property type="evidence" value="ECO:0007669"/>
    <property type="project" value="RHEA"/>
</dbReference>
<dbReference type="GO" id="GO:0004674">
    <property type="term" value="F:protein serine/threonine kinase activity"/>
    <property type="evidence" value="ECO:0000315"/>
    <property type="project" value="UniProtKB"/>
</dbReference>
<dbReference type="GO" id="GO:0007368">
    <property type="term" value="P:determination of left/right symmetry"/>
    <property type="evidence" value="ECO:0007669"/>
    <property type="project" value="Ensembl"/>
</dbReference>
<dbReference type="GO" id="GO:0007507">
    <property type="term" value="P:heart development"/>
    <property type="evidence" value="ECO:0007669"/>
    <property type="project" value="Ensembl"/>
</dbReference>
<dbReference type="CDD" id="cd14087">
    <property type="entry name" value="STKc_PSKH1"/>
    <property type="match status" value="1"/>
</dbReference>
<dbReference type="FunFam" id="1.10.510.10:FF:000416">
    <property type="entry name" value="Serine/threonine-protein kinase H1"/>
    <property type="match status" value="1"/>
</dbReference>
<dbReference type="Gene3D" id="1.10.510.10">
    <property type="entry name" value="Transferase(Phosphotransferase) domain 1"/>
    <property type="match status" value="1"/>
</dbReference>
<dbReference type="InterPro" id="IPR011009">
    <property type="entry name" value="Kinase-like_dom_sf"/>
</dbReference>
<dbReference type="InterPro" id="IPR000719">
    <property type="entry name" value="Prot_kinase_dom"/>
</dbReference>
<dbReference type="InterPro" id="IPR017441">
    <property type="entry name" value="Protein_kinase_ATP_BS"/>
</dbReference>
<dbReference type="InterPro" id="IPR008271">
    <property type="entry name" value="Ser/Thr_kinase_AS"/>
</dbReference>
<dbReference type="PANTHER" id="PTHR24347">
    <property type="entry name" value="SERINE/THREONINE-PROTEIN KINASE"/>
    <property type="match status" value="1"/>
</dbReference>
<dbReference type="Pfam" id="PF00069">
    <property type="entry name" value="Pkinase"/>
    <property type="match status" value="1"/>
</dbReference>
<dbReference type="SMART" id="SM00220">
    <property type="entry name" value="S_TKc"/>
    <property type="match status" value="1"/>
</dbReference>
<dbReference type="SUPFAM" id="SSF56112">
    <property type="entry name" value="Protein kinase-like (PK-like)"/>
    <property type="match status" value="1"/>
</dbReference>
<dbReference type="PROSITE" id="PS00107">
    <property type="entry name" value="PROTEIN_KINASE_ATP"/>
    <property type="match status" value="1"/>
</dbReference>
<dbReference type="PROSITE" id="PS50011">
    <property type="entry name" value="PROTEIN_KINASE_DOM"/>
    <property type="match status" value="1"/>
</dbReference>
<dbReference type="PROSITE" id="PS00108">
    <property type="entry name" value="PROTEIN_KINASE_ST"/>
    <property type="match status" value="1"/>
</dbReference>
<protein>
    <recommendedName>
        <fullName>Serine/threonine-protein kinase H1</fullName>
        <ecNumber evidence="9">2.7.11.1</ecNumber>
    </recommendedName>
    <alternativeName>
        <fullName>Protein serine kinase H1</fullName>
        <shortName>PSK-H1</shortName>
    </alternativeName>
</protein>
<organism>
    <name type="scientific">Homo sapiens</name>
    <name type="common">Human</name>
    <dbReference type="NCBI Taxonomy" id="9606"/>
    <lineage>
        <taxon>Eukaryota</taxon>
        <taxon>Metazoa</taxon>
        <taxon>Chordata</taxon>
        <taxon>Craniata</taxon>
        <taxon>Vertebrata</taxon>
        <taxon>Euteleostomi</taxon>
        <taxon>Mammalia</taxon>
        <taxon>Eutheria</taxon>
        <taxon>Euarchontoglires</taxon>
        <taxon>Primates</taxon>
        <taxon>Haplorrhini</taxon>
        <taxon>Catarrhini</taxon>
        <taxon>Hominidae</taxon>
        <taxon>Homo</taxon>
    </lineage>
</organism>
<proteinExistence type="evidence at protein level"/>
<accession>P11801</accession>
<accession>Q9NY19</accession>
<feature type="initiator methionine" description="Removed" evidence="10">
    <location>
        <position position="1"/>
    </location>
</feature>
<feature type="chain" id="PRO_0000086167" description="Serine/threonine-protein kinase H1">
    <location>
        <begin position="2"/>
        <end position="424"/>
    </location>
</feature>
<feature type="domain" description="Protein kinase" evidence="2">
    <location>
        <begin position="98"/>
        <end position="355"/>
    </location>
</feature>
<feature type="region of interest" description="Disordered" evidence="4">
    <location>
        <begin position="56"/>
        <end position="80"/>
    </location>
</feature>
<feature type="region of interest" description="Disordered" evidence="4">
    <location>
        <begin position="378"/>
        <end position="407"/>
    </location>
</feature>
<feature type="compositionally biased region" description="Low complexity" evidence="4">
    <location>
        <begin position="385"/>
        <end position="398"/>
    </location>
</feature>
<feature type="active site" description="Proton acceptor" evidence="2 3">
    <location>
        <position position="218"/>
    </location>
</feature>
<feature type="binding site" evidence="2">
    <location>
        <begin position="104"/>
        <end position="112"/>
    </location>
    <ligand>
        <name>ATP</name>
        <dbReference type="ChEBI" id="CHEBI:30616"/>
    </ligand>
</feature>
<feature type="binding site" evidence="2">
    <location>
        <position position="127"/>
    </location>
    <ligand>
        <name>ATP</name>
        <dbReference type="ChEBI" id="CHEBI:30616"/>
    </ligand>
</feature>
<feature type="modified residue" description="Phosphoserine; by autocatalysis" evidence="1">
    <location>
        <position position="380"/>
    </location>
</feature>
<feature type="modified residue" description="Phosphoserine; by autocatalysis" evidence="1">
    <location>
        <position position="381"/>
    </location>
</feature>
<feature type="lipid moiety-binding region" description="N-myristoyl glycine" evidence="7">
    <location>
        <position position="2"/>
    </location>
</feature>
<feature type="lipid moiety-binding region" description="S-palmitoyl cysteine" evidence="7">
    <location>
        <position position="3"/>
    </location>
</feature>
<feature type="sequence variant" id="VAR_090054" description="In PFIC13; likely pathogenic; severely reduced protein serine/threonine kinase activity; dbSNP:rs772761696." evidence="9">
    <original>R</original>
    <variation>W</variation>
    <location>
        <position position="121"/>
    </location>
</feature>
<feature type="sequence variant" id="VAR_090055" description="In PFIC13; uncertain significance; severely reduced protein serine/threonine kinase activity; dbSNP:rs1318348259." evidence="9">
    <original>I</original>
    <variation>V</variation>
    <location>
        <position position="126"/>
    </location>
</feature>
<feature type="sequence variant" id="VAR_090056" description="In PFIC13; uncertain significance; severely reduced protein serine/threonine kinase activity; dbSNP:rs776280871." evidence="9">
    <original>R</original>
    <variation>C</variation>
    <location>
        <position position="183"/>
    </location>
</feature>
<feature type="sequence variant" id="VAR_040614" description="In dbSNP:rs35552721." evidence="8">
    <original>N</original>
    <variation>S</variation>
    <location>
        <position position="301"/>
    </location>
</feature>
<feature type="mutagenesis site" description="Loss of autophosphorylation." evidence="5">
    <original>D</original>
    <variation>A</variation>
    <location>
        <position position="218"/>
    </location>
</feature>
<sequence length="424" mass="48035">MGCGTSKVLPEPPKDVQLDLVKKVEPFSGTKSDVYKHFITEVDSVGPVKAGFPAASQYAHPCPGPPTAGHTEPPSEPPRRARVAKYRAKFDPRVTAKYDIKALIGRGSFSRVVRVEHRATRQPYAIKMIETKYREGREVCESELRVLRRVRHANIIQLVEVFETQERVYMVMELATGGELFDRIIAKGSFTERDATRVLQMVLDGVRYLHALGITHRDLKPENLLYYHPGTDSKIIITDFGLASARKKGDDCLMKTTCGTPEYIAPEVLVRKPYTNSVDMWALGVIAYILLSGTMPFEDDNRTRLYRQILRGKYSYSGEPWPSVSNLAKDFIDRLLTVDPGARMTALQALRHPWVVSMAASSSMKNLHRSISQNLLKRASSRCQSTKSAQSTRSSRSTRSNKSRRVRERELRELNLRYQQQYNG</sequence>
<evidence type="ECO:0000255" key="1"/>
<evidence type="ECO:0000255" key="2">
    <source>
        <dbReference type="PROSITE-ProRule" id="PRU00159"/>
    </source>
</evidence>
<evidence type="ECO:0000255" key="3">
    <source>
        <dbReference type="PROSITE-ProRule" id="PRU10027"/>
    </source>
</evidence>
<evidence type="ECO:0000256" key="4">
    <source>
        <dbReference type="SAM" id="MobiDB-lite"/>
    </source>
</evidence>
<evidence type="ECO:0000269" key="5">
    <source>
    </source>
</evidence>
<evidence type="ECO:0000269" key="6">
    <source>
    </source>
</evidence>
<evidence type="ECO:0000269" key="7">
    <source>
    </source>
</evidence>
<evidence type="ECO:0000269" key="8">
    <source>
    </source>
</evidence>
<evidence type="ECO:0000269" key="9">
    <source>
    </source>
</evidence>
<evidence type="ECO:0000305" key="10"/>
<keyword id="KW-0067">ATP-binding</keyword>
<keyword id="KW-1003">Cell membrane</keyword>
<keyword id="KW-0963">Cytoplasm</keyword>
<keyword id="KW-0206">Cytoskeleton</keyword>
<keyword id="KW-0225">Disease variant</keyword>
<keyword id="KW-0256">Endoplasmic reticulum</keyword>
<keyword id="KW-0333">Golgi apparatus</keyword>
<keyword id="KW-0988">Intrahepatic cholestasis</keyword>
<keyword id="KW-0418">Kinase</keyword>
<keyword id="KW-0449">Lipoprotein</keyword>
<keyword id="KW-0472">Membrane</keyword>
<keyword id="KW-0519">Myristate</keyword>
<keyword id="KW-0547">Nucleotide-binding</keyword>
<keyword id="KW-0539">Nucleus</keyword>
<keyword id="KW-0564">Palmitate</keyword>
<keyword id="KW-0597">Phosphoprotein</keyword>
<keyword id="KW-1267">Proteomics identification</keyword>
<keyword id="KW-1185">Reference proteome</keyword>
<keyword id="KW-0723">Serine/threonine-protein kinase</keyword>
<keyword id="KW-0808">Transferase</keyword>
<comment type="function">
    <text evidence="6">Serine/threonine protein kinase that may be involved in the regulation of pre-mRNA processing. It may phosphorylate components of nuclear splice factor compartments (SFC), such as non-snRNP splicing factors containing a serine/arginine-rich domain (SR proteins). Reversible phosphorylation of SR proteins may cause their release into the nucleoplasm and change their local concentration, thereby influencing alternative splicing.</text>
</comment>
<comment type="catalytic activity">
    <reaction evidence="9">
        <text>L-seryl-[protein] + ATP = O-phospho-L-seryl-[protein] + ADP + H(+)</text>
        <dbReference type="Rhea" id="RHEA:17989"/>
        <dbReference type="Rhea" id="RHEA-COMP:9863"/>
        <dbReference type="Rhea" id="RHEA-COMP:11604"/>
        <dbReference type="ChEBI" id="CHEBI:15378"/>
        <dbReference type="ChEBI" id="CHEBI:29999"/>
        <dbReference type="ChEBI" id="CHEBI:30616"/>
        <dbReference type="ChEBI" id="CHEBI:83421"/>
        <dbReference type="ChEBI" id="CHEBI:456216"/>
        <dbReference type="EC" id="2.7.11.1"/>
    </reaction>
    <physiologicalReaction direction="left-to-right" evidence="9">
        <dbReference type="Rhea" id="RHEA:17990"/>
    </physiologicalReaction>
</comment>
<comment type="catalytic activity">
    <reaction evidence="9">
        <text>L-threonyl-[protein] + ATP = O-phospho-L-threonyl-[protein] + ADP + H(+)</text>
        <dbReference type="Rhea" id="RHEA:46608"/>
        <dbReference type="Rhea" id="RHEA-COMP:11060"/>
        <dbReference type="Rhea" id="RHEA-COMP:11605"/>
        <dbReference type="ChEBI" id="CHEBI:15378"/>
        <dbReference type="ChEBI" id="CHEBI:30013"/>
        <dbReference type="ChEBI" id="CHEBI:30616"/>
        <dbReference type="ChEBI" id="CHEBI:61977"/>
        <dbReference type="ChEBI" id="CHEBI:456216"/>
        <dbReference type="EC" id="2.7.11.1"/>
    </reaction>
    <physiologicalReaction direction="left-to-right" evidence="9">
        <dbReference type="Rhea" id="RHEA:46609"/>
    </physiologicalReaction>
</comment>
<comment type="activity regulation">
    <text>Activity depends on Ca(2+) concentration.</text>
</comment>
<comment type="subunit">
    <text>Homodimer.</text>
</comment>
<comment type="interaction">
    <interactant intactId="EBI-3922781">
        <id>P11801</id>
    </interactant>
    <interactant intactId="EBI-352572">
        <id>P08238</id>
        <label>HSP90AB1</label>
    </interactant>
    <organismsDiffer>false</organismsDiffer>
    <experiments>3</experiments>
</comment>
<comment type="subcellular location">
    <subcellularLocation>
        <location evidence="5 7">Golgi apparatus</location>
    </subcellularLocation>
    <subcellularLocation>
        <location evidence="5">Cytoplasm</location>
        <location evidence="5">Cytoskeleton</location>
        <location evidence="5">Microtubule organizing center</location>
        <location evidence="5">Centrosome</location>
    </subcellularLocation>
    <subcellularLocation>
        <location evidence="5">Nucleus speckle</location>
    </subcellularLocation>
    <subcellularLocation>
        <location evidence="7">Endoplasmic reticulum membrane</location>
        <topology>Lipid-anchor</topology>
    </subcellularLocation>
    <subcellularLocation>
        <location evidence="7">Cell membrane</location>
        <topology evidence="7">Lipid-anchor</topology>
    </subcellularLocation>
    <subcellularLocation>
        <location evidence="5 7">Cytoplasm</location>
    </subcellularLocation>
    <text evidence="5 7">Localized in the brefeldin A-sensitive Golgi compartment, at centrosomes, in the nucleus with a somewhat speckle-like presence, membrane-associated to the endoplasmic reticulum (ER) and the plasma membrane (PM), and more diffusely in the cytoplasm (PubMed:11087665, PubMed:14644153). Found to concentrate in splicing factor compartments (SFCs) within the nucleus of interphase cells (PubMed:11087665). The acylation-negative form may be only cytoplasmic and nuclear. Acylation seems to allow the sequestering to the intracellular membranes. Myristoylation may mediate targeting to the intracellular non-Golgi membranes and palmitoylation may mediate the targeting to the Golgi membranes. Dual acylation is required to stabilize the interaction with Golgi membranes.</text>
</comment>
<comment type="tissue specificity">
    <text evidence="5">Expressed in all tissues and cell lines tested with the highest level of abundance in testis.</text>
</comment>
<comment type="PTM">
    <text evidence="5">Autophosphorylated on serine residues.</text>
</comment>
<comment type="PTM">
    <text evidence="7">Myristoylated. Required for membrane association. Prerequisite for palmitoylation to occur.</text>
</comment>
<comment type="PTM">
    <text evidence="7">Palmitoylated.</text>
</comment>
<comment type="disease" evidence="9">
    <disease id="DI-06942">
        <name>Cholestasis, progressive familial intrahepatic, 13</name>
        <acronym>PFIC13</acronym>
        <description>A form of progressive cholestasis, a disorder characterized by early onset of cholestasis that progresses to hepatic fibrosis, cirrhosis, and end-stage liver disease. PFIC13 is an autosomal recessive form characterized by progressive liver dysfunction and chronic renal failure often associated with unilateral renal agenesis and glomerulosclerosis.</description>
        <dbReference type="MIM" id="620962"/>
    </disease>
    <text>The disease may be caused by variants affecting the gene represented in this entry.</text>
</comment>
<comment type="similarity">
    <text evidence="10">Belongs to the protein kinase superfamily. CAMK Ser/Thr protein kinase family.</text>
</comment>
<reference key="1">
    <citation type="journal article" date="2000" name="Genomics">
        <title>Characterization of PSKH1, a novel human protein serine kinase with centrosomal, Golgi, and nuclear localization.</title>
        <authorList>
            <person name="Brede G."/>
            <person name="Solheim J."/>
            <person name="Troen G."/>
            <person name="Prydz H."/>
        </authorList>
    </citation>
    <scope>NUCLEOTIDE SEQUENCE [MRNA]</scope>
    <scope>SUBCELLULAR LOCATION</scope>
    <scope>TISSUE SPECIFICITY</scope>
    <scope>PHOSPHORYLATION</scope>
    <scope>HOMODIMERIZATION</scope>
    <scope>MUTAGENESIS OF ASP-218</scope>
</reference>
<reference key="2">
    <citation type="journal article" date="2004" name="Genome Res.">
        <title>The status, quality, and expansion of the NIH full-length cDNA project: the Mammalian Gene Collection (MGC).</title>
        <authorList>
            <consortium name="The MGC Project Team"/>
        </authorList>
    </citation>
    <scope>NUCLEOTIDE SEQUENCE [LARGE SCALE MRNA]</scope>
    <source>
        <tissue>Colon</tissue>
    </source>
</reference>
<reference key="3">
    <citation type="journal article" date="1987" name="Proc. Natl. Acad. Sci. U.S.A.">
        <title>Homology probing: identification of cDNA clones encoding members of the protein-serine kinase family.</title>
        <authorList>
            <person name="Hanks S.K."/>
        </authorList>
    </citation>
    <scope>NUCLEOTIDE SEQUENCE [MRNA] OF 199-348</scope>
</reference>
<reference key="4">
    <citation type="journal article" date="2002" name="Nucleic Acids Res.">
        <title>PSKH1, a novel splice factor compartment-associated serine kinase.</title>
        <authorList>
            <person name="Brede G."/>
            <person name="Solheim J."/>
            <person name="Prydz H."/>
        </authorList>
    </citation>
    <scope>FUNCTION</scope>
</reference>
<reference key="5">
    <citation type="journal article" date="2003" name="Exp. Cell Res.">
        <title>Mutants of the protein serine kinase PSKH1 disassemble the Golgi apparatus.</title>
        <authorList>
            <person name="Brede G."/>
            <person name="Solheim J."/>
            <person name="Stang E."/>
            <person name="Prydz H."/>
        </authorList>
    </citation>
    <scope>MYRISTOYLATION AT GLY-2</scope>
    <scope>PALMITOYLATION AT CYS-3</scope>
    <scope>SUBCELLULAR LOCATION</scope>
</reference>
<reference key="6">
    <citation type="journal article" date="2007" name="Nature">
        <title>Patterns of somatic mutation in human cancer genomes.</title>
        <authorList>
            <person name="Greenman C."/>
            <person name="Stephens P."/>
            <person name="Smith R."/>
            <person name="Dalgliesh G.L."/>
            <person name="Hunter C."/>
            <person name="Bignell G."/>
            <person name="Davies H."/>
            <person name="Teague J."/>
            <person name="Butler A."/>
            <person name="Stevens C."/>
            <person name="Edkins S."/>
            <person name="O'Meara S."/>
            <person name="Vastrik I."/>
            <person name="Schmidt E.E."/>
            <person name="Avis T."/>
            <person name="Barthorpe S."/>
            <person name="Bhamra G."/>
            <person name="Buck G."/>
            <person name="Choudhury B."/>
            <person name="Clements J."/>
            <person name="Cole J."/>
            <person name="Dicks E."/>
            <person name="Forbes S."/>
            <person name="Gray K."/>
            <person name="Halliday K."/>
            <person name="Harrison R."/>
            <person name="Hills K."/>
            <person name="Hinton J."/>
            <person name="Jenkinson A."/>
            <person name="Jones D."/>
            <person name="Menzies A."/>
            <person name="Mironenko T."/>
            <person name="Perry J."/>
            <person name="Raine K."/>
            <person name="Richardson D."/>
            <person name="Shepherd R."/>
            <person name="Small A."/>
            <person name="Tofts C."/>
            <person name="Varian J."/>
            <person name="Webb T."/>
            <person name="West S."/>
            <person name="Widaa S."/>
            <person name="Yates A."/>
            <person name="Cahill D.P."/>
            <person name="Louis D.N."/>
            <person name="Goldstraw P."/>
            <person name="Nicholson A.G."/>
            <person name="Brasseur F."/>
            <person name="Looijenga L."/>
            <person name="Weber B.L."/>
            <person name="Chiew Y.-E."/>
            <person name="DeFazio A."/>
            <person name="Greaves M.F."/>
            <person name="Green A.R."/>
            <person name="Campbell P."/>
            <person name="Birney E."/>
            <person name="Easton D.F."/>
            <person name="Chenevix-Trench G."/>
            <person name="Tan M.-H."/>
            <person name="Khoo S.K."/>
            <person name="Teh B.T."/>
            <person name="Yuen S.T."/>
            <person name="Leung S.Y."/>
            <person name="Wooster R."/>
            <person name="Futreal P.A."/>
            <person name="Stratton M.R."/>
        </authorList>
    </citation>
    <scope>VARIANT [LARGE SCALE ANALYSIS] SER-301</scope>
</reference>
<reference key="7">
    <citation type="journal article" date="2024" name="Genet. Med.">
        <title>Large-scale genomic investigation of pediatric cholestasis reveals a novel hepatorenal ciliopathy caused by PSKH1 mutations.</title>
        <authorList>
            <person name="Maddirevula S."/>
            <person name="Shagrani M."/>
            <person name="Ji A.R."/>
            <person name="Horne C.R."/>
            <person name="Young S.N."/>
            <person name="Mather L.J."/>
            <person name="Alqahtani M."/>
            <person name="McKerlie C."/>
            <person name="Wood G."/>
            <person name="Potter P.K."/>
            <person name="Abdulwahab F."/>
            <person name="AlSheddi T."/>
            <person name="van der Woerd W.L."/>
            <person name="van Gassen K.L.I."/>
            <person name="AlBogami D."/>
            <person name="Kumar K."/>
            <person name="Muhammad Akhtar A.S."/>
            <person name="Binomar H."/>
            <person name="Almanea H."/>
            <person name="Faqeih E."/>
            <person name="Fuchs S.A."/>
            <person name="Scott J.W."/>
            <person name="Murphy J.M."/>
            <person name="Alkuraya F.S."/>
        </authorList>
    </citation>
    <scope>VARIANTS PFIC13 TRP-121; VAL-126 AND CYS-183</scope>
    <scope>CHARACTERIZATION OF VARIANTS PFIC13 TRP-121; VAL-126 AND CYS-183</scope>
    <scope>INVOLVEMENT IN PFIC13</scope>
    <scope>CATALYTIC ACTIVITY</scope>
</reference>